<proteinExistence type="evidence at protein level"/>
<accession>P16095</accession>
<evidence type="ECO:0000305" key="1"/>
<gene>
    <name type="primary">sdaA</name>
    <name type="ordered locus">b1814</name>
    <name type="ordered locus">JW1803</name>
</gene>
<name>SDHL_ECOLI</name>
<dbReference type="EC" id="4.3.1.17"/>
<dbReference type="EMBL" id="M28695">
    <property type="protein sequence ID" value="AAA63580.1"/>
    <property type="molecule type" value="Genomic_DNA"/>
</dbReference>
<dbReference type="EMBL" id="U00096">
    <property type="protein sequence ID" value="AAC74884.1"/>
    <property type="molecule type" value="Genomic_DNA"/>
</dbReference>
<dbReference type="EMBL" id="AP009048">
    <property type="protein sequence ID" value="BAA15621.1"/>
    <property type="molecule type" value="Genomic_DNA"/>
</dbReference>
<dbReference type="PIR" id="F64942">
    <property type="entry name" value="DWECL"/>
</dbReference>
<dbReference type="RefSeq" id="NP_416328.1">
    <property type="nucleotide sequence ID" value="NC_000913.3"/>
</dbReference>
<dbReference type="RefSeq" id="WP_000624298.1">
    <property type="nucleotide sequence ID" value="NZ_SSZK01000001.1"/>
</dbReference>
<dbReference type="SMR" id="P16095"/>
<dbReference type="BioGRID" id="4260949">
    <property type="interactions" value="10"/>
</dbReference>
<dbReference type="FunCoup" id="P16095">
    <property type="interactions" value="421"/>
</dbReference>
<dbReference type="IntAct" id="P16095">
    <property type="interactions" value="3"/>
</dbReference>
<dbReference type="STRING" id="511145.b1814"/>
<dbReference type="jPOST" id="P16095"/>
<dbReference type="PaxDb" id="511145-b1814"/>
<dbReference type="EnsemblBacteria" id="AAC74884">
    <property type="protein sequence ID" value="AAC74884"/>
    <property type="gene ID" value="b1814"/>
</dbReference>
<dbReference type="GeneID" id="93776063"/>
<dbReference type="GeneID" id="946331"/>
<dbReference type="KEGG" id="ecj:JW1803"/>
<dbReference type="KEGG" id="eco:b1814"/>
<dbReference type="KEGG" id="ecoc:C3026_10330"/>
<dbReference type="PATRIC" id="fig|511145.12.peg.1891"/>
<dbReference type="EchoBASE" id="EB0923"/>
<dbReference type="eggNOG" id="COG1760">
    <property type="taxonomic scope" value="Bacteria"/>
</dbReference>
<dbReference type="HOGENOM" id="CLU_022305_0_1_6"/>
<dbReference type="InParanoid" id="P16095"/>
<dbReference type="OMA" id="CMDRGMN"/>
<dbReference type="OrthoDB" id="9805537at2"/>
<dbReference type="PhylomeDB" id="P16095"/>
<dbReference type="BioCyc" id="EcoCyc:LSERINEDEAM1-MONOMER"/>
<dbReference type="BioCyc" id="MetaCyc:LSERINEDEAM1-MONOMER"/>
<dbReference type="BRENDA" id="4.3.1.17">
    <property type="organism ID" value="2026"/>
</dbReference>
<dbReference type="UniPathway" id="UPA00138"/>
<dbReference type="PRO" id="PR:P16095"/>
<dbReference type="Proteomes" id="UP000000625">
    <property type="component" value="Chromosome"/>
</dbReference>
<dbReference type="GO" id="GO:0005829">
    <property type="term" value="C:cytosol"/>
    <property type="evidence" value="ECO:0000314"/>
    <property type="project" value="EcoCyc"/>
</dbReference>
<dbReference type="GO" id="GO:0051539">
    <property type="term" value="F:4 iron, 4 sulfur cluster binding"/>
    <property type="evidence" value="ECO:0007669"/>
    <property type="project" value="UniProtKB-KW"/>
</dbReference>
<dbReference type="GO" id="GO:0003941">
    <property type="term" value="F:L-serine ammonia-lyase activity"/>
    <property type="evidence" value="ECO:0000314"/>
    <property type="project" value="EcoCyc"/>
</dbReference>
<dbReference type="GO" id="GO:0046872">
    <property type="term" value="F:metal ion binding"/>
    <property type="evidence" value="ECO:0007669"/>
    <property type="project" value="UniProtKB-KW"/>
</dbReference>
<dbReference type="GO" id="GO:0006094">
    <property type="term" value="P:gluconeogenesis"/>
    <property type="evidence" value="ECO:0007669"/>
    <property type="project" value="UniProtKB-UniPathway"/>
</dbReference>
<dbReference type="GO" id="GO:0006565">
    <property type="term" value="P:L-serine catabolic process"/>
    <property type="evidence" value="ECO:0000314"/>
    <property type="project" value="EcoCyc"/>
</dbReference>
<dbReference type="FunFam" id="3.30.1330.90:FF:000001">
    <property type="entry name" value="L-serine ammonia-lyase 1"/>
    <property type="match status" value="1"/>
</dbReference>
<dbReference type="Gene3D" id="3.30.1330.90">
    <property type="entry name" value="D-3-phosphoglycerate dehydrogenase, domain 3"/>
    <property type="match status" value="1"/>
</dbReference>
<dbReference type="InterPro" id="IPR029009">
    <property type="entry name" value="ASB_dom_sf"/>
</dbReference>
<dbReference type="InterPro" id="IPR051318">
    <property type="entry name" value="Fe-S_L-Ser"/>
</dbReference>
<dbReference type="InterPro" id="IPR004644">
    <property type="entry name" value="Fe-S_L-Ser_mono"/>
</dbReference>
<dbReference type="InterPro" id="IPR005130">
    <property type="entry name" value="Ser_deHydtase-like_asu"/>
</dbReference>
<dbReference type="InterPro" id="IPR005131">
    <property type="entry name" value="Ser_deHydtase_bsu"/>
</dbReference>
<dbReference type="NCBIfam" id="NF011598">
    <property type="entry name" value="PRK15023.1"/>
    <property type="match status" value="1"/>
</dbReference>
<dbReference type="NCBIfam" id="TIGR00720">
    <property type="entry name" value="sda_mono"/>
    <property type="match status" value="1"/>
</dbReference>
<dbReference type="PANTHER" id="PTHR30182">
    <property type="entry name" value="L-SERINE DEHYDRATASE"/>
    <property type="match status" value="1"/>
</dbReference>
<dbReference type="PANTHER" id="PTHR30182:SF1">
    <property type="entry name" value="L-SERINE DEHYDRATASE 1"/>
    <property type="match status" value="1"/>
</dbReference>
<dbReference type="Pfam" id="PF03313">
    <property type="entry name" value="SDH_alpha"/>
    <property type="match status" value="1"/>
</dbReference>
<dbReference type="Pfam" id="PF03315">
    <property type="entry name" value="SDH_beta"/>
    <property type="match status" value="1"/>
</dbReference>
<dbReference type="SUPFAM" id="SSF143548">
    <property type="entry name" value="Serine metabolism enzymes domain"/>
    <property type="match status" value="1"/>
</dbReference>
<comment type="function">
    <text>Also deaminates threonine, particularly when it is present in high concentration.</text>
</comment>
<comment type="catalytic activity">
    <reaction>
        <text>L-serine = pyruvate + NH4(+)</text>
        <dbReference type="Rhea" id="RHEA:19169"/>
        <dbReference type="ChEBI" id="CHEBI:15361"/>
        <dbReference type="ChEBI" id="CHEBI:28938"/>
        <dbReference type="ChEBI" id="CHEBI:33384"/>
        <dbReference type="EC" id="4.3.1.17"/>
    </reaction>
</comment>
<comment type="cofactor">
    <cofactor evidence="1">
        <name>[4Fe-4S] cluster</name>
        <dbReference type="ChEBI" id="CHEBI:49883"/>
    </cofactor>
    <text evidence="1">Binds 1 [4Fe-4S] cluster.</text>
</comment>
<comment type="pathway">
    <text>Carbohydrate biosynthesis; gluconeogenesis.</text>
</comment>
<comment type="induction">
    <text>It is made aerobically and anaerobically, in minimal medium.</text>
</comment>
<comment type="PTM">
    <text>Activated by post-translational modification by a system involving at least three gene products. Activation is mimicked in vitro by iron and dithiothreitol. There is considerable evidence for a free-radical activation mechanism.</text>
</comment>
<comment type="similarity">
    <text evidence="1">Belongs to the iron-sulfur dependent L-serine dehydratase family.</text>
</comment>
<reference key="1">
    <citation type="journal article" date="1989" name="J. Bacteriol.">
        <title>L-serine degradation in Escherichia coli K-12: cloning and sequencing of the sdaA gene.</title>
        <authorList>
            <person name="Su H."/>
            <person name="Lang B.F."/>
            <person name="Newman E.B."/>
        </authorList>
    </citation>
    <scope>NUCLEOTIDE SEQUENCE [GENOMIC DNA]</scope>
    <source>
        <strain>K12</strain>
    </source>
</reference>
<reference key="2">
    <citation type="journal article" date="1993" name="Eur. J. Biochem.">
        <title>Use of gene fusions of the structural gene sdaA to purify L-serine deaminase 1 from Escherichia coli K-12.</title>
        <authorList>
            <person name="Su H."/>
            <person name="Moniakis J."/>
            <person name="Newman E.B."/>
        </authorList>
    </citation>
    <scope>PARTIAL PROTEIN SEQUENCE</scope>
    <scope>SEQUENCE REVISION</scope>
    <scope>CHARACTERIZATION</scope>
    <source>
        <strain>K12</strain>
    </source>
</reference>
<reference key="3">
    <citation type="journal article" date="1996" name="DNA Res.">
        <title>A 460-kb DNA sequence of the Escherichia coli K-12 genome corresponding to the 40.1-50.0 min region on the linkage map.</title>
        <authorList>
            <person name="Itoh T."/>
            <person name="Aiba H."/>
            <person name="Baba T."/>
            <person name="Fujita K."/>
            <person name="Hayashi K."/>
            <person name="Inada T."/>
            <person name="Isono K."/>
            <person name="Kasai H."/>
            <person name="Kimura S."/>
            <person name="Kitakawa M."/>
            <person name="Kitagawa M."/>
            <person name="Makino K."/>
            <person name="Miki T."/>
            <person name="Mizobuchi K."/>
            <person name="Mori H."/>
            <person name="Mori T."/>
            <person name="Motomura K."/>
            <person name="Nakade S."/>
            <person name="Nakamura Y."/>
            <person name="Nashimoto H."/>
            <person name="Nishio Y."/>
            <person name="Oshima T."/>
            <person name="Saito N."/>
            <person name="Sampei G."/>
            <person name="Seki Y."/>
            <person name="Sivasundaram S."/>
            <person name="Tagami H."/>
            <person name="Takeda J."/>
            <person name="Takemoto K."/>
            <person name="Wada C."/>
            <person name="Yamamoto Y."/>
            <person name="Horiuchi T."/>
        </authorList>
    </citation>
    <scope>NUCLEOTIDE SEQUENCE [LARGE SCALE GENOMIC DNA]</scope>
    <source>
        <strain>K12 / W3110 / ATCC 27325 / DSM 5911</strain>
    </source>
</reference>
<reference key="4">
    <citation type="journal article" date="1997" name="Science">
        <title>The complete genome sequence of Escherichia coli K-12.</title>
        <authorList>
            <person name="Blattner F.R."/>
            <person name="Plunkett G. III"/>
            <person name="Bloch C.A."/>
            <person name="Perna N.T."/>
            <person name="Burland V."/>
            <person name="Riley M."/>
            <person name="Collado-Vides J."/>
            <person name="Glasner J.D."/>
            <person name="Rode C.K."/>
            <person name="Mayhew G.F."/>
            <person name="Gregor J."/>
            <person name="Davis N.W."/>
            <person name="Kirkpatrick H.A."/>
            <person name="Goeden M.A."/>
            <person name="Rose D.J."/>
            <person name="Mau B."/>
            <person name="Shao Y."/>
        </authorList>
    </citation>
    <scope>NUCLEOTIDE SEQUENCE [LARGE SCALE GENOMIC DNA]</scope>
    <source>
        <strain>K12 / MG1655 / ATCC 47076</strain>
    </source>
</reference>
<reference key="5">
    <citation type="journal article" date="2006" name="Mol. Syst. Biol.">
        <title>Highly accurate genome sequences of Escherichia coli K-12 strains MG1655 and W3110.</title>
        <authorList>
            <person name="Hayashi K."/>
            <person name="Morooka N."/>
            <person name="Yamamoto Y."/>
            <person name="Fujita K."/>
            <person name="Isono K."/>
            <person name="Choi S."/>
            <person name="Ohtsubo E."/>
            <person name="Baba T."/>
            <person name="Wanner B.L."/>
            <person name="Mori H."/>
            <person name="Horiuchi T."/>
        </authorList>
    </citation>
    <scope>NUCLEOTIDE SEQUENCE [LARGE SCALE GENOMIC DNA]</scope>
    <source>
        <strain>K12 / W3110 / ATCC 27325 / DSM 5911</strain>
    </source>
</reference>
<sequence length="454" mass="48907">MISLFDMFKVGIGPSSSHTVGPMKAGKQFVDDLVEKGLLDSVTRVAVDVYGSLSLTGKGHHTDIAIIMGLAGNEPATVDIDSIPGFIRDVEERERLLLAQGRHEVDFPRDNGMRFHNGNLPLHENGMQIHAYNGDEVVYSKTYYSIGGGFIVDEEHFGQDAANEVSVPYPFKSATELLAYCNETGYSLSGLAMQNELALHSKKEIDEYFAHVWQTMQACIDRGMNTEGVLPGPLRVPRRASALRRMLVSSDKLSNDPMNVIDWVNMFALAVNEENAAGGRVVTAPTNGACGIVPAVLAYYDHFIESVSPDIYTRYFMAAGAIGALYKMNASISGAEVGCQGEVGVACSMAAAGLAELLGGSPEQVCVAAEIGMEHNLGLTCDPVAGQVQVPCIERNAIASVKAINAARMALRRTSAPRVSLDKVIETMYETGKDMNAKYRETSRGGLAIKVQCD</sequence>
<feature type="chain" id="PRO_0000171903" description="L-serine dehydratase 1">
    <location>
        <begin position="1"/>
        <end position="454"/>
    </location>
</feature>
<organism>
    <name type="scientific">Escherichia coli (strain K12)</name>
    <dbReference type="NCBI Taxonomy" id="83333"/>
    <lineage>
        <taxon>Bacteria</taxon>
        <taxon>Pseudomonadati</taxon>
        <taxon>Pseudomonadota</taxon>
        <taxon>Gammaproteobacteria</taxon>
        <taxon>Enterobacterales</taxon>
        <taxon>Enterobacteriaceae</taxon>
        <taxon>Escherichia</taxon>
    </lineage>
</organism>
<protein>
    <recommendedName>
        <fullName>L-serine dehydratase 1</fullName>
        <shortName>SDH 1</shortName>
        <ecNumber>4.3.1.17</ecNumber>
    </recommendedName>
    <alternativeName>
        <fullName>L-serine deaminase 1</fullName>
        <shortName>L-SD1</shortName>
    </alternativeName>
</protein>
<keyword id="KW-0004">4Fe-4S</keyword>
<keyword id="KW-0903">Direct protein sequencing</keyword>
<keyword id="KW-0312">Gluconeogenesis</keyword>
<keyword id="KW-0408">Iron</keyword>
<keyword id="KW-0411">Iron-sulfur</keyword>
<keyword id="KW-0456">Lyase</keyword>
<keyword id="KW-0479">Metal-binding</keyword>
<keyword id="KW-1185">Reference proteome</keyword>